<proteinExistence type="inferred from homology"/>
<sequence>MRAMQTHTEIAPMPIPGHVDPVPVPREVTPREDGRIDLIGLPRKQIAELFAQAGLDAKAAKLRAKQVFHWLYHRGVTDFDAMTDIAKTMRPWLAERFVIGRPEIVEAQVSTDGTRKWLLRTADKHDFEMVFIPDADRGTLCVSSQVGCTLNCRFCHTGTMRLVRNLTPGEIVGQVMLARDALGEWPKGANDSRVATMAGLDFDDEDEGSYTSDGRLLTNIVMMGMGEPLYNFDNVRDALKLVMDGDGLALSKRRITLSTSGVVPMMERCGEEIGVNLAVSLHAVTKDVRDEIVPINRKYGIEELLQACADYPGASNARRITFEYVMLKDKNDSDDHARELVRLIRQYKLPAKVNLIPFNPWPGAPYECSSPDRIKSFANIVFEAGISAPVRTPRGRDIDAACGQLKTASERKSRAELDRLAEEKLAALG</sequence>
<keyword id="KW-0004">4Fe-4S</keyword>
<keyword id="KW-0963">Cytoplasm</keyword>
<keyword id="KW-1015">Disulfide bond</keyword>
<keyword id="KW-0408">Iron</keyword>
<keyword id="KW-0411">Iron-sulfur</keyword>
<keyword id="KW-0479">Metal-binding</keyword>
<keyword id="KW-0489">Methyltransferase</keyword>
<keyword id="KW-1185">Reference proteome</keyword>
<keyword id="KW-0698">rRNA processing</keyword>
<keyword id="KW-0949">S-adenosyl-L-methionine</keyword>
<keyword id="KW-0808">Transferase</keyword>
<keyword id="KW-0819">tRNA processing</keyword>
<organism>
    <name type="scientific">Novosphingobium aromaticivorans (strain ATCC 700278 / DSM 12444 / CCUG 56034 / CIP 105152 / NBRC 16084 / F199)</name>
    <dbReference type="NCBI Taxonomy" id="279238"/>
    <lineage>
        <taxon>Bacteria</taxon>
        <taxon>Pseudomonadati</taxon>
        <taxon>Pseudomonadota</taxon>
        <taxon>Alphaproteobacteria</taxon>
        <taxon>Sphingomonadales</taxon>
        <taxon>Sphingomonadaceae</taxon>
        <taxon>Novosphingobium</taxon>
    </lineage>
</organism>
<reference key="1">
    <citation type="submission" date="2006-01" db="EMBL/GenBank/DDBJ databases">
        <title>Complete sequence of Novosphingobium aromaticivorans DSM 12444.</title>
        <authorList>
            <consortium name="US DOE Joint Genome Institute"/>
            <person name="Copeland A."/>
            <person name="Lucas S."/>
            <person name="Lapidus A."/>
            <person name="Barry K."/>
            <person name="Detter J.C."/>
            <person name="Glavina T."/>
            <person name="Hammon N."/>
            <person name="Israni S."/>
            <person name="Pitluck S."/>
            <person name="Chain P."/>
            <person name="Malfatti S."/>
            <person name="Shin M."/>
            <person name="Vergez L."/>
            <person name="Schmutz J."/>
            <person name="Larimer F."/>
            <person name="Land M."/>
            <person name="Kyrpides N."/>
            <person name="Ivanova N."/>
            <person name="Fredrickson J."/>
            <person name="Balkwill D."/>
            <person name="Romine M.F."/>
            <person name="Richardson P."/>
        </authorList>
    </citation>
    <scope>NUCLEOTIDE SEQUENCE [LARGE SCALE GENOMIC DNA]</scope>
    <source>
        <strain>ATCC 700278 / DSM 12444 / CCUG 56034 / CIP 105152 / NBRC 16084 / F199</strain>
    </source>
</reference>
<accession>Q2G8E3</accession>
<name>RLMN_NOVAD</name>
<protein>
    <recommendedName>
        <fullName evidence="1">Dual-specificity RNA methyltransferase RlmN</fullName>
        <ecNumber evidence="1">2.1.1.192</ecNumber>
    </recommendedName>
    <alternativeName>
        <fullName evidence="1">23S rRNA (adenine(2503)-C(2))-methyltransferase</fullName>
    </alternativeName>
    <alternativeName>
        <fullName evidence="1">23S rRNA m2A2503 methyltransferase</fullName>
    </alternativeName>
    <alternativeName>
        <fullName evidence="1">Ribosomal RNA large subunit methyltransferase N</fullName>
    </alternativeName>
    <alternativeName>
        <fullName evidence="1">tRNA (adenine(37)-C(2))-methyltransferase</fullName>
    </alternativeName>
    <alternativeName>
        <fullName evidence="1">tRNA m2A37 methyltransferase</fullName>
    </alternativeName>
</protein>
<gene>
    <name evidence="1" type="primary">rlmN</name>
    <name type="ordered locus">Saro_1436</name>
</gene>
<dbReference type="EC" id="2.1.1.192" evidence="1"/>
<dbReference type="EMBL" id="CP000248">
    <property type="protein sequence ID" value="ABD25880.1"/>
    <property type="molecule type" value="Genomic_DNA"/>
</dbReference>
<dbReference type="RefSeq" id="WP_011445094.1">
    <property type="nucleotide sequence ID" value="NC_007794.1"/>
</dbReference>
<dbReference type="SMR" id="Q2G8E3"/>
<dbReference type="STRING" id="279238.Saro_1436"/>
<dbReference type="KEGG" id="nar:Saro_1436"/>
<dbReference type="eggNOG" id="COG0820">
    <property type="taxonomic scope" value="Bacteria"/>
</dbReference>
<dbReference type="HOGENOM" id="CLU_029101_0_0_5"/>
<dbReference type="Proteomes" id="UP000009134">
    <property type="component" value="Chromosome"/>
</dbReference>
<dbReference type="GO" id="GO:0005737">
    <property type="term" value="C:cytoplasm"/>
    <property type="evidence" value="ECO:0007669"/>
    <property type="project" value="UniProtKB-SubCell"/>
</dbReference>
<dbReference type="GO" id="GO:0051539">
    <property type="term" value="F:4 iron, 4 sulfur cluster binding"/>
    <property type="evidence" value="ECO:0007669"/>
    <property type="project" value="UniProtKB-UniRule"/>
</dbReference>
<dbReference type="GO" id="GO:0046872">
    <property type="term" value="F:metal ion binding"/>
    <property type="evidence" value="ECO:0007669"/>
    <property type="project" value="UniProtKB-KW"/>
</dbReference>
<dbReference type="GO" id="GO:0070040">
    <property type="term" value="F:rRNA (adenine(2503)-C2-)-methyltransferase activity"/>
    <property type="evidence" value="ECO:0007669"/>
    <property type="project" value="UniProtKB-UniRule"/>
</dbReference>
<dbReference type="GO" id="GO:0019843">
    <property type="term" value="F:rRNA binding"/>
    <property type="evidence" value="ECO:0007669"/>
    <property type="project" value="UniProtKB-UniRule"/>
</dbReference>
<dbReference type="GO" id="GO:0002935">
    <property type="term" value="F:tRNA (adenine(37)-C2)-methyltransferase activity"/>
    <property type="evidence" value="ECO:0007669"/>
    <property type="project" value="UniProtKB-UniRule"/>
</dbReference>
<dbReference type="GO" id="GO:0000049">
    <property type="term" value="F:tRNA binding"/>
    <property type="evidence" value="ECO:0007669"/>
    <property type="project" value="UniProtKB-UniRule"/>
</dbReference>
<dbReference type="GO" id="GO:0070475">
    <property type="term" value="P:rRNA base methylation"/>
    <property type="evidence" value="ECO:0007669"/>
    <property type="project" value="UniProtKB-UniRule"/>
</dbReference>
<dbReference type="GO" id="GO:0030488">
    <property type="term" value="P:tRNA methylation"/>
    <property type="evidence" value="ECO:0007669"/>
    <property type="project" value="UniProtKB-UniRule"/>
</dbReference>
<dbReference type="CDD" id="cd01335">
    <property type="entry name" value="Radical_SAM"/>
    <property type="match status" value="1"/>
</dbReference>
<dbReference type="Gene3D" id="1.10.150.530">
    <property type="match status" value="1"/>
</dbReference>
<dbReference type="Gene3D" id="3.20.20.70">
    <property type="entry name" value="Aldolase class I"/>
    <property type="match status" value="1"/>
</dbReference>
<dbReference type="HAMAP" id="MF_01849">
    <property type="entry name" value="RNA_methyltr_RlmN"/>
    <property type="match status" value="1"/>
</dbReference>
<dbReference type="InterPro" id="IPR013785">
    <property type="entry name" value="Aldolase_TIM"/>
</dbReference>
<dbReference type="InterPro" id="IPR040072">
    <property type="entry name" value="Methyltransferase_A"/>
</dbReference>
<dbReference type="InterPro" id="IPR048641">
    <property type="entry name" value="RlmN_N"/>
</dbReference>
<dbReference type="InterPro" id="IPR027492">
    <property type="entry name" value="RNA_MTrfase_RlmN"/>
</dbReference>
<dbReference type="InterPro" id="IPR004383">
    <property type="entry name" value="rRNA_lsu_MTrfase_RlmN/Cfr"/>
</dbReference>
<dbReference type="InterPro" id="IPR007197">
    <property type="entry name" value="rSAM"/>
</dbReference>
<dbReference type="PANTHER" id="PTHR30544">
    <property type="entry name" value="23S RRNA METHYLTRANSFERASE"/>
    <property type="match status" value="1"/>
</dbReference>
<dbReference type="PANTHER" id="PTHR30544:SF5">
    <property type="entry name" value="RADICAL SAM CORE DOMAIN-CONTAINING PROTEIN"/>
    <property type="match status" value="1"/>
</dbReference>
<dbReference type="Pfam" id="PF04055">
    <property type="entry name" value="Radical_SAM"/>
    <property type="match status" value="1"/>
</dbReference>
<dbReference type="Pfam" id="PF21016">
    <property type="entry name" value="RlmN_N"/>
    <property type="match status" value="1"/>
</dbReference>
<dbReference type="PIRSF" id="PIRSF006004">
    <property type="entry name" value="CHP00048"/>
    <property type="match status" value="1"/>
</dbReference>
<dbReference type="SFLD" id="SFLDF00275">
    <property type="entry name" value="adenosine_C2_methyltransferase"/>
    <property type="match status" value="1"/>
</dbReference>
<dbReference type="SFLD" id="SFLDG01062">
    <property type="entry name" value="methyltransferase_(Class_A)"/>
    <property type="match status" value="1"/>
</dbReference>
<dbReference type="SUPFAM" id="SSF102114">
    <property type="entry name" value="Radical SAM enzymes"/>
    <property type="match status" value="1"/>
</dbReference>
<dbReference type="PROSITE" id="PS51918">
    <property type="entry name" value="RADICAL_SAM"/>
    <property type="match status" value="1"/>
</dbReference>
<evidence type="ECO:0000255" key="1">
    <source>
        <dbReference type="HAMAP-Rule" id="MF_01849"/>
    </source>
</evidence>
<evidence type="ECO:0000255" key="2">
    <source>
        <dbReference type="PROSITE-ProRule" id="PRU01266"/>
    </source>
</evidence>
<evidence type="ECO:0000256" key="3">
    <source>
        <dbReference type="SAM" id="MobiDB-lite"/>
    </source>
</evidence>
<feature type="chain" id="PRO_0000350291" description="Dual-specificity RNA methyltransferase RlmN">
    <location>
        <begin position="1"/>
        <end position="429"/>
    </location>
</feature>
<feature type="domain" description="Radical SAM core" evidence="2">
    <location>
        <begin position="134"/>
        <end position="397"/>
    </location>
</feature>
<feature type="region of interest" description="Disordered" evidence="3">
    <location>
        <begin position="1"/>
        <end position="23"/>
    </location>
</feature>
<feature type="active site" description="Proton acceptor" evidence="1">
    <location>
        <position position="128"/>
    </location>
</feature>
<feature type="active site" description="S-methylcysteine intermediate" evidence="1">
    <location>
        <position position="402"/>
    </location>
</feature>
<feature type="binding site" evidence="1">
    <location>
        <position position="148"/>
    </location>
    <ligand>
        <name>[4Fe-4S] cluster</name>
        <dbReference type="ChEBI" id="CHEBI:49883"/>
        <note>4Fe-4S-S-AdoMet</note>
    </ligand>
</feature>
<feature type="binding site" evidence="1">
    <location>
        <position position="152"/>
    </location>
    <ligand>
        <name>[4Fe-4S] cluster</name>
        <dbReference type="ChEBI" id="CHEBI:49883"/>
        <note>4Fe-4S-S-AdoMet</note>
    </ligand>
</feature>
<feature type="binding site" evidence="1">
    <location>
        <position position="155"/>
    </location>
    <ligand>
        <name>[4Fe-4S] cluster</name>
        <dbReference type="ChEBI" id="CHEBI:49883"/>
        <note>4Fe-4S-S-AdoMet</note>
    </ligand>
</feature>
<feature type="binding site" evidence="1">
    <location>
        <begin position="226"/>
        <end position="227"/>
    </location>
    <ligand>
        <name>S-adenosyl-L-methionine</name>
        <dbReference type="ChEBI" id="CHEBI:59789"/>
    </ligand>
</feature>
<feature type="binding site" evidence="1">
    <location>
        <position position="258"/>
    </location>
    <ligand>
        <name>S-adenosyl-L-methionine</name>
        <dbReference type="ChEBI" id="CHEBI:59789"/>
    </ligand>
</feature>
<feature type="binding site" evidence="1">
    <location>
        <begin position="280"/>
        <end position="282"/>
    </location>
    <ligand>
        <name>S-adenosyl-L-methionine</name>
        <dbReference type="ChEBI" id="CHEBI:59789"/>
    </ligand>
</feature>
<feature type="binding site" evidence="1">
    <location>
        <position position="359"/>
    </location>
    <ligand>
        <name>S-adenosyl-L-methionine</name>
        <dbReference type="ChEBI" id="CHEBI:59789"/>
    </ligand>
</feature>
<feature type="disulfide bond" description="(transient)" evidence="1">
    <location>
        <begin position="141"/>
        <end position="402"/>
    </location>
</feature>
<comment type="function">
    <text evidence="1">Specifically methylates position 2 of adenine 2503 in 23S rRNA and position 2 of adenine 37 in tRNAs. m2A2503 modification seems to play a crucial role in the proofreading step occurring at the peptidyl transferase center and thus would serve to optimize ribosomal fidelity.</text>
</comment>
<comment type="catalytic activity">
    <reaction evidence="1">
        <text>adenosine(2503) in 23S rRNA + 2 reduced [2Fe-2S]-[ferredoxin] + 2 S-adenosyl-L-methionine = 2-methyladenosine(2503) in 23S rRNA + 5'-deoxyadenosine + L-methionine + 2 oxidized [2Fe-2S]-[ferredoxin] + S-adenosyl-L-homocysteine</text>
        <dbReference type="Rhea" id="RHEA:42916"/>
        <dbReference type="Rhea" id="RHEA-COMP:10000"/>
        <dbReference type="Rhea" id="RHEA-COMP:10001"/>
        <dbReference type="Rhea" id="RHEA-COMP:10152"/>
        <dbReference type="Rhea" id="RHEA-COMP:10282"/>
        <dbReference type="ChEBI" id="CHEBI:17319"/>
        <dbReference type="ChEBI" id="CHEBI:33737"/>
        <dbReference type="ChEBI" id="CHEBI:33738"/>
        <dbReference type="ChEBI" id="CHEBI:57844"/>
        <dbReference type="ChEBI" id="CHEBI:57856"/>
        <dbReference type="ChEBI" id="CHEBI:59789"/>
        <dbReference type="ChEBI" id="CHEBI:74411"/>
        <dbReference type="ChEBI" id="CHEBI:74497"/>
        <dbReference type="EC" id="2.1.1.192"/>
    </reaction>
</comment>
<comment type="catalytic activity">
    <reaction evidence="1">
        <text>adenosine(37) in tRNA + 2 reduced [2Fe-2S]-[ferredoxin] + 2 S-adenosyl-L-methionine = 2-methyladenosine(37) in tRNA + 5'-deoxyadenosine + L-methionine + 2 oxidized [2Fe-2S]-[ferredoxin] + S-adenosyl-L-homocysteine</text>
        <dbReference type="Rhea" id="RHEA:43332"/>
        <dbReference type="Rhea" id="RHEA-COMP:10000"/>
        <dbReference type="Rhea" id="RHEA-COMP:10001"/>
        <dbReference type="Rhea" id="RHEA-COMP:10162"/>
        <dbReference type="Rhea" id="RHEA-COMP:10485"/>
        <dbReference type="ChEBI" id="CHEBI:17319"/>
        <dbReference type="ChEBI" id="CHEBI:33737"/>
        <dbReference type="ChEBI" id="CHEBI:33738"/>
        <dbReference type="ChEBI" id="CHEBI:57844"/>
        <dbReference type="ChEBI" id="CHEBI:57856"/>
        <dbReference type="ChEBI" id="CHEBI:59789"/>
        <dbReference type="ChEBI" id="CHEBI:74411"/>
        <dbReference type="ChEBI" id="CHEBI:74497"/>
        <dbReference type="EC" id="2.1.1.192"/>
    </reaction>
</comment>
<comment type="cofactor">
    <cofactor evidence="1">
        <name>[4Fe-4S] cluster</name>
        <dbReference type="ChEBI" id="CHEBI:49883"/>
    </cofactor>
    <text evidence="1">Binds 1 [4Fe-4S] cluster. The cluster is coordinated with 3 cysteines and an exchangeable S-adenosyl-L-methionine.</text>
</comment>
<comment type="subcellular location">
    <subcellularLocation>
        <location evidence="1">Cytoplasm</location>
    </subcellularLocation>
</comment>
<comment type="miscellaneous">
    <text evidence="1">Reaction proceeds by a ping-pong mechanism involving intermediate methylation of a conserved cysteine residue.</text>
</comment>
<comment type="similarity">
    <text evidence="1">Belongs to the radical SAM superfamily. RlmN family.</text>
</comment>